<accession>E1C8P7</accession>
<name>DSCL1_CHICK</name>
<sequence length="2042" mass="223884">MWLVTFFLLYSLRKAHTEDVGTSLYFVNDSIQQVTFSSTVGVVIPCPAAGSPSAVLRWYLATGDDIYDVPHIRHVHANGTLQLYPFSPSAFNSFIHDNDYFCTAENSAGKIRSPNIRVKAVFREPYTVRVEDQRSMRGNVAVFKCLIPSSVQEYVSVVSWEKDTVSIIPENRFFITSYGGLYISDVQKEDALSTYRCITKHKYSGETRQSNGARLSVSDADPAESIPTMLDSFQSREVRAGRLVELPCIASGYPNPAIRWLKDGRPLPADGRWAKRITGLSIADLRVEDSGTYICEVTNTFGSAEVTGTLTVIDPLRVTLTPKKLKTGIGSTVILSCALSGSPEYVIRWYRNTDLVVVDDFISIRGISNETLLITAAQKSHSGAYQCFATRKSQTAQDFSIITLEDGTPRIVSSFSEKVVNPGEQFSLMCAAKGAPPPTVTWALDDEPIPRDNGHRTNQYTMSDGTTVSHMNVTSPQIKDGGVYRCTARNSVGSAEYQARINVRGPPSIRAMKNITAVAGRDTFINCRVIGYPYYSIKWYKDSLLLPDNHRQVVFENGTLKLMDVQKGMDEGEYLCSVLIQPQLSISQSVHVTVKVPPLIQPFEFPPASIGQLLYIPCVVSSGDMPIHITWRKDGHVILSGSGVTIESKEFMSSLQISSVSLKHNGNYTCIASNAAATVSRERQLIVRVPPRFVVQPNNQDGIYGKAGVLNCSVDGYPPPKVMWKHAKGSGNPQQYHPIPLTGRIQILPNSSLLIRHVLEEDIGYYLCQASNGVGTDISKSMFLTVKIPAMITSHPNTTIAIKGQSKELNCTARGERPIIIRWEKGDTVIDPDRNMRYAIATKDNGDEVISTLKLKPADRGDSVFFSCHAINSYGEDRGLIQLTVQEPPDPPELEIREVKARSMNLRWTQRFDGNSIITGFDIEYKNKSDSWDFKQSTRNISPTINQANIVDLHPASVYSIRMYSFNKIGRSEPSKELTISTEEAAPDGPPMDVTLQPMTSQSIQVTWKAPKKELQNGVIRGYQIGYRENSPGSNGQYSIVEMKATGDSEVYTLDNLKKFAQYGVVVQAFNRAGTGPSSSEINATTLEDVPSQPPENVRAISITSDVAVISWSEPPRSTLNGVLKGYRVIFWSLYMDGEWGEMQNITTTRERVELRGMEKFTNYSVQVLAYTQAGDGVRSSVLYIQTKEDIPGPPAGIKAVPSSASSVVVSWLPPAKPNGIIRKYTIFCSSPGSGQPAPSEYETSPDQLFYRIAHLNRGQQYMLWVAAVTSAGRGNISEKVTIEPAGKAPAKIISFGGTVTTPWMKDVRLPCNSVGEPVPAIKWTKDSEDSAIPVTVDGHRLIQANGTLVLRSVKAEDSGYYTCTATNTWGFDTIIINLLVQVPPDQPRLTVSKTSASSITLAWIPGDNGGSSIRGFVLQYSVDNSEEWKDVFISSSERSFKLESLKCGTWYKVKLAAKNSVGAGRISEIIEAKTHGREPSFSKDQHLFTHINSTHARLNLQGWSSGGCPITAIVLEYRPKGNWGWQSLRTNSSGEVFLTELREATWYELRMKACNSAGCGNESTQFATLDYDGSTIPPIKSAQGEGDDVKKLFTIACPIILATLGVALLFIIRKKRKEKRLKRLRDAKSLAEMLISKNNRSFDTPVKGPPQGPRLHIDIPRVQLLIEDKEGIKQLGDDKATIPVTDTEFSQAVNPQSFCTGVSLHHPALIQNTGPLIDMSDIRPGTNPVSRKSVKSAHSTRNRYSSQWTLTKCQASTPARTLTSDWRTVGSQHGITVTESDSYSASLSQDTDKGRNSMVSTESASSTYEELARAYEHAKLEEQLQHAKFEITECFISDSSSDQMTTGTTDNADSMTSMSTPSEPGICRFTASPPKPQDSERGKSVAVPIPHRASKSDYCNLPLYVKSDAFFRKPDSHEPCPVVPPREASIRSLARGYHPPARHLTLDPAAKPPGLPPPSSSSSSTTLPQRTLPMPTAASTAPAPAPAPAAPAEPPANTTTTTTTHSKVGGSRDSLLEMSTSGAGRAQKQGAGAYSKSYTLV</sequence>
<comment type="function">
    <text evidence="1 7">Cell adhesion molecule that plays a role in neuronal self-avoidance. Promotes repulsion between specific neuronal processes of either the same cell or the same subtype of cells (By similarity). Adhesion molecule that promotes lamina-specific synaptic connections in the retina: expressed in specific subsets of interneurons and retinal ganglion cells (RGCs) and promotes synaptic connectivity via homophilic interactions (PubMed:18216854).</text>
</comment>
<comment type="subunit">
    <text evidence="7">Homodimer; mediates homophilic interactions to promote cell adhesion.</text>
</comment>
<comment type="subcellular location">
    <subcellularLocation>
        <location evidence="1">Cell membrane</location>
        <topology evidence="1">Single-pass type I membrane protein</topology>
    </subcellularLocation>
    <subcellularLocation>
        <location evidence="7">Synapse</location>
    </subcellularLocation>
</comment>
<comment type="tissue specificity">
    <text evidence="7">SDK1, SDK2, DSCAM and DSCAML1 are expressed in non-overlapping subsets of interneurons and retinal ganglion cells (RGCs) that form synapses in distinct inner plexiform layer (IPL) sublaminae (PubMed:18216854).</text>
</comment>
<evidence type="ECO:0000250" key="1">
    <source>
        <dbReference type="UniProtKB" id="Q4VA61"/>
    </source>
</evidence>
<evidence type="ECO:0000255" key="2"/>
<evidence type="ECO:0000255" key="3">
    <source>
        <dbReference type="PROSITE-ProRule" id="PRU00114"/>
    </source>
</evidence>
<evidence type="ECO:0000255" key="4">
    <source>
        <dbReference type="PROSITE-ProRule" id="PRU00316"/>
    </source>
</evidence>
<evidence type="ECO:0000255" key="5">
    <source>
        <dbReference type="PROSITE-ProRule" id="PRU00498"/>
    </source>
</evidence>
<evidence type="ECO:0000256" key="6">
    <source>
        <dbReference type="SAM" id="MobiDB-lite"/>
    </source>
</evidence>
<evidence type="ECO:0000269" key="7">
    <source>
    </source>
</evidence>
<evidence type="ECO:0000305" key="8"/>
<keyword id="KW-0130">Cell adhesion</keyword>
<keyword id="KW-1003">Cell membrane</keyword>
<keyword id="KW-1015">Disulfide bond</keyword>
<keyword id="KW-0325">Glycoprotein</keyword>
<keyword id="KW-0393">Immunoglobulin domain</keyword>
<keyword id="KW-0472">Membrane</keyword>
<keyword id="KW-0524">Neurogenesis</keyword>
<keyword id="KW-1185">Reference proteome</keyword>
<keyword id="KW-0677">Repeat</keyword>
<keyword id="KW-0732">Signal</keyword>
<keyword id="KW-0770">Synapse</keyword>
<keyword id="KW-0812">Transmembrane</keyword>
<keyword id="KW-1133">Transmembrane helix</keyword>
<organism>
    <name type="scientific">Gallus gallus</name>
    <name type="common">Chicken</name>
    <dbReference type="NCBI Taxonomy" id="9031"/>
    <lineage>
        <taxon>Eukaryota</taxon>
        <taxon>Metazoa</taxon>
        <taxon>Chordata</taxon>
        <taxon>Craniata</taxon>
        <taxon>Vertebrata</taxon>
        <taxon>Euteleostomi</taxon>
        <taxon>Archelosauria</taxon>
        <taxon>Archosauria</taxon>
        <taxon>Dinosauria</taxon>
        <taxon>Saurischia</taxon>
        <taxon>Theropoda</taxon>
        <taxon>Coelurosauria</taxon>
        <taxon>Aves</taxon>
        <taxon>Neognathae</taxon>
        <taxon>Galloanserae</taxon>
        <taxon>Galliformes</taxon>
        <taxon>Phasianidae</taxon>
        <taxon>Phasianinae</taxon>
        <taxon>Gallus</taxon>
    </lineage>
</organism>
<dbReference type="EMBL" id="AADN03008271">
    <property type="status" value="NOT_ANNOTATED_CDS"/>
    <property type="molecule type" value="Genomic_DNA"/>
</dbReference>
<dbReference type="EMBL" id="AADN03008296">
    <property type="status" value="NOT_ANNOTATED_CDS"/>
    <property type="molecule type" value="Genomic_DNA"/>
</dbReference>
<dbReference type="SMR" id="E1C8P7"/>
<dbReference type="FunCoup" id="E1C8P7">
    <property type="interactions" value="653"/>
</dbReference>
<dbReference type="STRING" id="9031.ENSGALP00000011821"/>
<dbReference type="GlyCosmos" id="E1C8P7">
    <property type="glycosylation" value="20 sites, No reported glycans"/>
</dbReference>
<dbReference type="GlyGen" id="E1C8P7">
    <property type="glycosylation" value="21 sites"/>
</dbReference>
<dbReference type="PaxDb" id="9031-ENSGALP00000011821"/>
<dbReference type="VEuPathDB" id="HostDB:geneid_428249"/>
<dbReference type="eggNOG" id="KOG3510">
    <property type="taxonomic scope" value="Eukaryota"/>
</dbReference>
<dbReference type="HOGENOM" id="CLU_001038_0_1_1"/>
<dbReference type="InParanoid" id="E1C8P7"/>
<dbReference type="OrthoDB" id="152385at2759"/>
<dbReference type="PRO" id="PR:E1C8P7"/>
<dbReference type="Proteomes" id="UP000000539">
    <property type="component" value="Chromosome 24"/>
</dbReference>
<dbReference type="Bgee" id="ENSGALG00000007314">
    <property type="expression patterns" value="Expressed in brain and 2 other cell types or tissues"/>
</dbReference>
<dbReference type="GO" id="GO:0005886">
    <property type="term" value="C:plasma membrane"/>
    <property type="evidence" value="ECO:0007669"/>
    <property type="project" value="UniProtKB-SubCell"/>
</dbReference>
<dbReference type="GO" id="GO:0045202">
    <property type="term" value="C:synapse"/>
    <property type="evidence" value="ECO:0000314"/>
    <property type="project" value="UniProtKB"/>
</dbReference>
<dbReference type="GO" id="GO:0060219">
    <property type="term" value="P:camera-type eye photoreceptor cell differentiation"/>
    <property type="evidence" value="ECO:0000314"/>
    <property type="project" value="UniProtKB"/>
</dbReference>
<dbReference type="GO" id="GO:0007156">
    <property type="term" value="P:homophilic cell adhesion via plasma membrane adhesion molecules"/>
    <property type="evidence" value="ECO:0000314"/>
    <property type="project" value="UniProtKB"/>
</dbReference>
<dbReference type="GO" id="GO:0010842">
    <property type="term" value="P:retina layer formation"/>
    <property type="evidence" value="ECO:0000314"/>
    <property type="project" value="UniProtKB"/>
</dbReference>
<dbReference type="GO" id="GO:0007416">
    <property type="term" value="P:synapse assembly"/>
    <property type="evidence" value="ECO:0000314"/>
    <property type="project" value="UniProtKB"/>
</dbReference>
<dbReference type="CDD" id="cd00063">
    <property type="entry name" value="FN3"/>
    <property type="match status" value="6"/>
</dbReference>
<dbReference type="CDD" id="cd00096">
    <property type="entry name" value="Ig"/>
    <property type="match status" value="1"/>
</dbReference>
<dbReference type="CDD" id="cd05734">
    <property type="entry name" value="Ig_DSCAM"/>
    <property type="match status" value="1"/>
</dbReference>
<dbReference type="CDD" id="cd05735">
    <property type="entry name" value="Ig_DSCAM"/>
    <property type="match status" value="1"/>
</dbReference>
<dbReference type="CDD" id="cd20958">
    <property type="entry name" value="IgI_5_Dscam"/>
    <property type="match status" value="1"/>
</dbReference>
<dbReference type="FunFam" id="2.60.40.10:FF:000333">
    <property type="entry name" value="Down syndrome cell adhesion molecule"/>
    <property type="match status" value="1"/>
</dbReference>
<dbReference type="FunFam" id="2.60.40.10:FF:000141">
    <property type="entry name" value="Down syndrome cell adhesion molecule a"/>
    <property type="match status" value="1"/>
</dbReference>
<dbReference type="FunFam" id="2.60.40.10:FF:000176">
    <property type="entry name" value="Down syndrome cell adhesion molecule a"/>
    <property type="match status" value="1"/>
</dbReference>
<dbReference type="FunFam" id="2.60.40.10:FF:000215">
    <property type="entry name" value="Down syndrome cell adhesion molecule a"/>
    <property type="match status" value="1"/>
</dbReference>
<dbReference type="FunFam" id="2.60.40.10:FF:000017">
    <property type="entry name" value="Down syndrome cell adhesion molecule b"/>
    <property type="match status" value="2"/>
</dbReference>
<dbReference type="FunFam" id="2.60.40.10:FF:000104">
    <property type="entry name" value="Down syndrome cell adhesion molecule b"/>
    <property type="match status" value="1"/>
</dbReference>
<dbReference type="FunFam" id="2.60.40.10:FF:000167">
    <property type="entry name" value="Down syndrome cell adhesion molecule b"/>
    <property type="match status" value="1"/>
</dbReference>
<dbReference type="FunFam" id="2.60.40.10:FF:000172">
    <property type="entry name" value="Down syndrome cell adhesion molecule b"/>
    <property type="match status" value="1"/>
</dbReference>
<dbReference type="FunFam" id="2.60.40.10:FF:000219">
    <property type="entry name" value="Down syndrome cell adhesion molecule homolog"/>
    <property type="match status" value="1"/>
</dbReference>
<dbReference type="FunFam" id="2.60.40.10:FF:000229">
    <property type="entry name" value="Down syndrome cell adhesion molecule homolog"/>
    <property type="match status" value="1"/>
</dbReference>
<dbReference type="FunFam" id="2.60.40.10:FF:000120">
    <property type="entry name" value="Down syndrome cell adhesion molecule like 1"/>
    <property type="match status" value="1"/>
</dbReference>
<dbReference type="FunFam" id="2.60.40.10:FF:000264">
    <property type="entry name" value="Down syndrome cell adhesion molecule like 1"/>
    <property type="match status" value="1"/>
</dbReference>
<dbReference type="FunFam" id="2.60.40.10:FF:000315">
    <property type="entry name" value="Down syndrome cell adhesion molecule like 1"/>
    <property type="match status" value="1"/>
</dbReference>
<dbReference type="FunFam" id="2.60.40.10:FF:000482">
    <property type="entry name" value="Down syndrome cell adhesion molecule like 1"/>
    <property type="match status" value="1"/>
</dbReference>
<dbReference type="FunFam" id="2.60.40.10:FF:000477">
    <property type="entry name" value="DS cell adhesion molecule like 1"/>
    <property type="match status" value="1"/>
</dbReference>
<dbReference type="Gene3D" id="2.60.40.10">
    <property type="entry name" value="Immunoglobulins"/>
    <property type="match status" value="16"/>
</dbReference>
<dbReference type="InterPro" id="IPR056754">
    <property type="entry name" value="DSCAM/DSCAML_C"/>
</dbReference>
<dbReference type="InterPro" id="IPR003961">
    <property type="entry name" value="FN3_dom"/>
</dbReference>
<dbReference type="InterPro" id="IPR036116">
    <property type="entry name" value="FN3_sf"/>
</dbReference>
<dbReference type="InterPro" id="IPR007110">
    <property type="entry name" value="Ig-like_dom"/>
</dbReference>
<dbReference type="InterPro" id="IPR036179">
    <property type="entry name" value="Ig-like_dom_sf"/>
</dbReference>
<dbReference type="InterPro" id="IPR013783">
    <property type="entry name" value="Ig-like_fold"/>
</dbReference>
<dbReference type="InterPro" id="IPR013098">
    <property type="entry name" value="Ig_I-set"/>
</dbReference>
<dbReference type="InterPro" id="IPR003599">
    <property type="entry name" value="Ig_sub"/>
</dbReference>
<dbReference type="InterPro" id="IPR003598">
    <property type="entry name" value="Ig_sub2"/>
</dbReference>
<dbReference type="InterPro" id="IPR013106">
    <property type="entry name" value="Ig_V-set"/>
</dbReference>
<dbReference type="PANTHER" id="PTHR44170:SF6">
    <property type="entry name" value="CONTACTIN"/>
    <property type="match status" value="1"/>
</dbReference>
<dbReference type="PANTHER" id="PTHR44170">
    <property type="entry name" value="PROTEIN SIDEKICK"/>
    <property type="match status" value="1"/>
</dbReference>
<dbReference type="Pfam" id="PF00041">
    <property type="entry name" value="fn3"/>
    <property type="match status" value="5"/>
</dbReference>
<dbReference type="Pfam" id="PF25059">
    <property type="entry name" value="FN3_DSCAM-DSCAML_C"/>
    <property type="match status" value="1"/>
</dbReference>
<dbReference type="Pfam" id="PF07679">
    <property type="entry name" value="I-set"/>
    <property type="match status" value="4"/>
</dbReference>
<dbReference type="Pfam" id="PF13927">
    <property type="entry name" value="Ig_3"/>
    <property type="match status" value="4"/>
</dbReference>
<dbReference type="SMART" id="SM00060">
    <property type="entry name" value="FN3"/>
    <property type="match status" value="6"/>
</dbReference>
<dbReference type="SMART" id="SM00409">
    <property type="entry name" value="IG"/>
    <property type="match status" value="10"/>
</dbReference>
<dbReference type="SMART" id="SM00408">
    <property type="entry name" value="IGc2"/>
    <property type="match status" value="9"/>
</dbReference>
<dbReference type="SMART" id="SM00406">
    <property type="entry name" value="IGv"/>
    <property type="match status" value="2"/>
</dbReference>
<dbReference type="SUPFAM" id="SSF49265">
    <property type="entry name" value="Fibronectin type III"/>
    <property type="match status" value="3"/>
</dbReference>
<dbReference type="SUPFAM" id="SSF48726">
    <property type="entry name" value="Immunoglobulin"/>
    <property type="match status" value="10"/>
</dbReference>
<dbReference type="PROSITE" id="PS50853">
    <property type="entry name" value="FN3"/>
    <property type="match status" value="6"/>
</dbReference>
<dbReference type="PROSITE" id="PS50835">
    <property type="entry name" value="IG_LIKE"/>
    <property type="match status" value="9"/>
</dbReference>
<feature type="signal peptide" evidence="2">
    <location>
        <begin position="1"/>
        <end position="17"/>
    </location>
</feature>
<feature type="chain" id="PRO_0000434544" description="Cell adhesion molecule DSCAML1" evidence="2">
    <location>
        <begin position="18"/>
        <end position="2042"/>
    </location>
</feature>
<feature type="topological domain" description="Extracellular" evidence="8">
    <location>
        <begin position="18"/>
        <end position="1592"/>
    </location>
</feature>
<feature type="transmembrane region" description="Helical" evidence="2">
    <location>
        <begin position="1593"/>
        <end position="1613"/>
    </location>
</feature>
<feature type="topological domain" description="Cytoplasmic" evidence="8">
    <location>
        <begin position="1614"/>
        <end position="2042"/>
    </location>
</feature>
<feature type="domain" description="Ig-like C2-type 1" evidence="3">
    <location>
        <begin position="37"/>
        <end position="107"/>
    </location>
</feature>
<feature type="domain" description="Ig-like C2-type 2" evidence="3">
    <location>
        <begin position="114"/>
        <end position="216"/>
    </location>
</feature>
<feature type="domain" description="Ig-like C2-type 3" evidence="3">
    <location>
        <begin position="227"/>
        <end position="311"/>
    </location>
</feature>
<feature type="domain" description="Ig-like C2-type 4" evidence="3">
    <location>
        <begin position="315"/>
        <end position="403"/>
    </location>
</feature>
<feature type="domain" description="Ig-like C2-type 5" evidence="3">
    <location>
        <begin position="409"/>
        <end position="502"/>
    </location>
</feature>
<feature type="domain" description="Ig-like C2-type 6" evidence="3">
    <location>
        <begin position="507"/>
        <end position="587"/>
    </location>
</feature>
<feature type="domain" description="Ig-like C2-type 7" evidence="3">
    <location>
        <begin position="597"/>
        <end position="686"/>
    </location>
</feature>
<feature type="domain" description="Ig-like C2-type 8" evidence="3">
    <location>
        <begin position="691"/>
        <end position="785"/>
    </location>
</feature>
<feature type="domain" description="Ig-like C2-type 9" evidence="3">
    <location>
        <begin position="789"/>
        <end position="886"/>
    </location>
</feature>
<feature type="domain" description="Fibronectin type-III 1" evidence="4">
    <location>
        <begin position="888"/>
        <end position="985"/>
    </location>
</feature>
<feature type="domain" description="Fibronectin type-III 2" evidence="4">
    <location>
        <begin position="990"/>
        <end position="1089"/>
    </location>
</feature>
<feature type="domain" description="Fibronectin type-III 3" evidence="4">
    <location>
        <begin position="1094"/>
        <end position="1190"/>
    </location>
</feature>
<feature type="domain" description="Fibronectin type-III 4" evidence="4">
    <location>
        <begin position="1194"/>
        <end position="1289"/>
    </location>
</feature>
<feature type="domain" description="Ig-like C2-type 10" evidence="3">
    <location>
        <begin position="1279"/>
        <end position="1368"/>
    </location>
</feature>
<feature type="domain" description="Fibronectin type-III 5" evidence="4">
    <location>
        <begin position="1384"/>
        <end position="1478"/>
    </location>
</feature>
<feature type="domain" description="Fibronectin type-III 6" evidence="4">
    <location>
        <begin position="1479"/>
        <end position="1579"/>
    </location>
</feature>
<feature type="region of interest" description="Disordered" evidence="6">
    <location>
        <begin position="1716"/>
        <end position="1742"/>
    </location>
</feature>
<feature type="region of interest" description="Disordered" evidence="6">
    <location>
        <begin position="1781"/>
        <end position="1805"/>
    </location>
</feature>
<feature type="region of interest" description="Disordered" evidence="6">
    <location>
        <begin position="1841"/>
        <end position="1865"/>
    </location>
</feature>
<feature type="region of interest" description="Disordered" evidence="6">
    <location>
        <begin position="1940"/>
        <end position="2042"/>
    </location>
</feature>
<feature type="compositionally biased region" description="Basic residues" evidence="6">
    <location>
        <begin position="1733"/>
        <end position="1742"/>
    </location>
</feature>
<feature type="compositionally biased region" description="Polar residues" evidence="6">
    <location>
        <begin position="1781"/>
        <end position="1790"/>
    </location>
</feature>
<feature type="compositionally biased region" description="Polar residues" evidence="6">
    <location>
        <begin position="1841"/>
        <end position="1863"/>
    </location>
</feature>
<feature type="compositionally biased region" description="Pro residues" evidence="6">
    <location>
        <begin position="1951"/>
        <end position="1960"/>
    </location>
</feature>
<feature type="compositionally biased region" description="Low complexity" evidence="6">
    <location>
        <begin position="1961"/>
        <end position="1983"/>
    </location>
</feature>
<feature type="compositionally biased region" description="Pro residues" evidence="6">
    <location>
        <begin position="1984"/>
        <end position="1995"/>
    </location>
</feature>
<feature type="compositionally biased region" description="Low complexity" evidence="6">
    <location>
        <begin position="1996"/>
        <end position="2005"/>
    </location>
</feature>
<feature type="compositionally biased region" description="Low complexity" evidence="6">
    <location>
        <begin position="2023"/>
        <end position="2034"/>
    </location>
</feature>
<feature type="glycosylation site" description="N-linked (GlcNAc...) asparagine" evidence="5">
    <location>
        <position position="28"/>
    </location>
</feature>
<feature type="glycosylation site" description="N-linked (GlcNAc...) asparagine" evidence="5">
    <location>
        <position position="78"/>
    </location>
</feature>
<feature type="glycosylation site" description="N-linked (GlcNAc...) asparagine" evidence="5">
    <location>
        <position position="369"/>
    </location>
</feature>
<feature type="glycosylation site" description="N-linked (GlcNAc...) asparagine" evidence="5">
    <location>
        <position position="472"/>
    </location>
</feature>
<feature type="glycosylation site" description="N-linked (GlcNAc...) asparagine" evidence="5">
    <location>
        <position position="514"/>
    </location>
</feature>
<feature type="glycosylation site" description="N-linked (GlcNAc...) asparagine" evidence="5">
    <location>
        <position position="557"/>
    </location>
</feature>
<feature type="glycosylation site" description="N-linked (GlcNAc...) asparagine" evidence="5">
    <location>
        <position position="667"/>
    </location>
</feature>
<feature type="glycosylation site" description="N-linked (GlcNAc...) asparagine" evidence="5">
    <location>
        <position position="711"/>
    </location>
</feature>
<feature type="glycosylation site" description="N-linked (GlcNAc...) asparagine" evidence="5">
    <location>
        <position position="750"/>
    </location>
</feature>
<feature type="glycosylation site" description="N-linked (GlcNAc...) asparagine" evidence="5">
    <location>
        <position position="797"/>
    </location>
</feature>
<feature type="glycosylation site" description="N-linked (GlcNAc...) asparagine" evidence="5">
    <location>
        <position position="810"/>
    </location>
</feature>
<feature type="glycosylation site" description="N-linked (GlcNAc...) asparagine" evidence="5">
    <location>
        <position position="927"/>
    </location>
</feature>
<feature type="glycosylation site" description="N-linked (GlcNAc...) asparagine" evidence="5">
    <location>
        <position position="1083"/>
    </location>
</feature>
<feature type="glycosylation site" description="N-linked (GlcNAc...) asparagine" evidence="5">
    <location>
        <position position="1145"/>
    </location>
</feature>
<feature type="glycosylation site" description="N-linked (GlcNAc...) asparagine" evidence="5">
    <location>
        <position position="1163"/>
    </location>
</feature>
<feature type="glycosylation site" description="N-linked (GlcNAc...) asparagine" evidence="5">
    <location>
        <position position="1276"/>
    </location>
</feature>
<feature type="glycosylation site" description="N-linked (GlcNAc...) asparagine" evidence="5">
    <location>
        <position position="1346"/>
    </location>
</feature>
<feature type="glycosylation site" description="N-linked (GlcNAc...) asparagine" evidence="5">
    <location>
        <position position="1493"/>
    </location>
</feature>
<feature type="glycosylation site" description="N-linked (GlcNAc...) asparagine" evidence="5">
    <location>
        <position position="1532"/>
    </location>
</feature>
<feature type="glycosylation site" description="N-linked (GlcNAc...) asparagine" evidence="5">
    <location>
        <position position="1562"/>
    </location>
</feature>
<feature type="disulfide bond" evidence="3">
    <location>
        <begin position="46"/>
        <end position="102"/>
    </location>
</feature>
<feature type="disulfide bond" evidence="3">
    <location>
        <begin position="145"/>
        <end position="197"/>
    </location>
</feature>
<feature type="disulfide bond" evidence="3">
    <location>
        <begin position="248"/>
        <end position="295"/>
    </location>
</feature>
<feature type="disulfide bond" evidence="3">
    <location>
        <begin position="337"/>
        <end position="387"/>
    </location>
</feature>
<feature type="disulfide bond" evidence="3">
    <location>
        <begin position="430"/>
        <end position="486"/>
    </location>
</feature>
<feature type="disulfide bond" evidence="3">
    <location>
        <begin position="527"/>
        <end position="576"/>
    </location>
</feature>
<feature type="disulfide bond" evidence="3">
    <location>
        <begin position="618"/>
        <end position="670"/>
    </location>
</feature>
<feature type="disulfide bond" evidence="3">
    <location>
        <begin position="712"/>
        <end position="768"/>
    </location>
</feature>
<feature type="disulfide bond" evidence="3">
    <location>
        <begin position="811"/>
        <end position="868"/>
    </location>
</feature>
<feature type="disulfide bond" evidence="3">
    <location>
        <begin position="1312"/>
        <end position="1364"/>
    </location>
</feature>
<protein>
    <recommendedName>
        <fullName evidence="8">Cell adhesion molecule DSCAML1</fullName>
    </recommendedName>
    <alternativeName>
        <fullName>Down syndrome cell adhesion molecule-like protein 1 homolog</fullName>
    </alternativeName>
</protein>
<reference key="1">
    <citation type="journal article" date="2004" name="Nature">
        <title>Sequence and comparative analysis of the chicken genome provide unique perspectives on vertebrate evolution.</title>
        <authorList>
            <person name="Hillier L.W."/>
            <person name="Miller W."/>
            <person name="Birney E."/>
            <person name="Warren W."/>
            <person name="Hardison R.C."/>
            <person name="Ponting C.P."/>
            <person name="Bork P."/>
            <person name="Burt D.W."/>
            <person name="Groenen M.A.M."/>
            <person name="Delany M.E."/>
            <person name="Dodgson J.B."/>
            <person name="Chinwalla A.T."/>
            <person name="Cliften P.F."/>
            <person name="Clifton S.W."/>
            <person name="Delehaunty K.D."/>
            <person name="Fronick C."/>
            <person name="Fulton R.S."/>
            <person name="Graves T.A."/>
            <person name="Kremitzki C."/>
            <person name="Layman D."/>
            <person name="Magrini V."/>
            <person name="McPherson J.D."/>
            <person name="Miner T.L."/>
            <person name="Minx P."/>
            <person name="Nash W.E."/>
            <person name="Nhan M.N."/>
            <person name="Nelson J.O."/>
            <person name="Oddy L.G."/>
            <person name="Pohl C.S."/>
            <person name="Randall-Maher J."/>
            <person name="Smith S.M."/>
            <person name="Wallis J.W."/>
            <person name="Yang S.-P."/>
            <person name="Romanov M.N."/>
            <person name="Rondelli C.M."/>
            <person name="Paton B."/>
            <person name="Smith J."/>
            <person name="Morrice D."/>
            <person name="Daniels L."/>
            <person name="Tempest H.G."/>
            <person name="Robertson L."/>
            <person name="Masabanda J.S."/>
            <person name="Griffin D.K."/>
            <person name="Vignal A."/>
            <person name="Fillon V."/>
            <person name="Jacobbson L."/>
            <person name="Kerje S."/>
            <person name="Andersson L."/>
            <person name="Crooijmans R.P."/>
            <person name="Aerts J."/>
            <person name="van der Poel J.J."/>
            <person name="Ellegren H."/>
            <person name="Caldwell R.B."/>
            <person name="Hubbard S.J."/>
            <person name="Grafham D.V."/>
            <person name="Kierzek A.M."/>
            <person name="McLaren S.R."/>
            <person name="Overton I.M."/>
            <person name="Arakawa H."/>
            <person name="Beattie K.J."/>
            <person name="Bezzubov Y."/>
            <person name="Boardman P.E."/>
            <person name="Bonfield J.K."/>
            <person name="Croning M.D.R."/>
            <person name="Davies R.M."/>
            <person name="Francis M.D."/>
            <person name="Humphray S.J."/>
            <person name="Scott C.E."/>
            <person name="Taylor R.G."/>
            <person name="Tickle C."/>
            <person name="Brown W.R.A."/>
            <person name="Rogers J."/>
            <person name="Buerstedde J.-M."/>
            <person name="Wilson S.A."/>
            <person name="Stubbs L."/>
            <person name="Ovcharenko I."/>
            <person name="Gordon L."/>
            <person name="Lucas S."/>
            <person name="Miller M.M."/>
            <person name="Inoko H."/>
            <person name="Shiina T."/>
            <person name="Kaufman J."/>
            <person name="Salomonsen J."/>
            <person name="Skjoedt K."/>
            <person name="Wong G.K.-S."/>
            <person name="Wang J."/>
            <person name="Liu B."/>
            <person name="Wang J."/>
            <person name="Yu J."/>
            <person name="Yang H."/>
            <person name="Nefedov M."/>
            <person name="Koriabine M."/>
            <person name="Dejong P.J."/>
            <person name="Goodstadt L."/>
            <person name="Webber C."/>
            <person name="Dickens N.J."/>
            <person name="Letunic I."/>
            <person name="Suyama M."/>
            <person name="Torrents D."/>
            <person name="von Mering C."/>
            <person name="Zdobnov E.M."/>
            <person name="Makova K."/>
            <person name="Nekrutenko A."/>
            <person name="Elnitski L."/>
            <person name="Eswara P."/>
            <person name="King D.C."/>
            <person name="Yang S.-P."/>
            <person name="Tyekucheva S."/>
            <person name="Radakrishnan A."/>
            <person name="Harris R.S."/>
            <person name="Chiaromonte F."/>
            <person name="Taylor J."/>
            <person name="He J."/>
            <person name="Rijnkels M."/>
            <person name="Griffiths-Jones S."/>
            <person name="Ureta-Vidal A."/>
            <person name="Hoffman M.M."/>
            <person name="Severin J."/>
            <person name="Searle S.M.J."/>
            <person name="Law A.S."/>
            <person name="Speed D."/>
            <person name="Waddington D."/>
            <person name="Cheng Z."/>
            <person name="Tuzun E."/>
            <person name="Eichler E."/>
            <person name="Bao Z."/>
            <person name="Flicek P."/>
            <person name="Shteynberg D.D."/>
            <person name="Brent M.R."/>
            <person name="Bye J.M."/>
            <person name="Huckle E.J."/>
            <person name="Chatterji S."/>
            <person name="Dewey C."/>
            <person name="Pachter L."/>
            <person name="Kouranov A."/>
            <person name="Mourelatos Z."/>
            <person name="Hatzigeorgiou A.G."/>
            <person name="Paterson A.H."/>
            <person name="Ivarie R."/>
            <person name="Brandstrom M."/>
            <person name="Axelsson E."/>
            <person name="Backstrom N."/>
            <person name="Berlin S."/>
            <person name="Webster M.T."/>
            <person name="Pourquie O."/>
            <person name="Reymond A."/>
            <person name="Ucla C."/>
            <person name="Antonarakis S.E."/>
            <person name="Long M."/>
            <person name="Emerson J.J."/>
            <person name="Betran E."/>
            <person name="Dupanloup I."/>
            <person name="Kaessmann H."/>
            <person name="Hinrichs A.S."/>
            <person name="Bejerano G."/>
            <person name="Furey T.S."/>
            <person name="Harte R.A."/>
            <person name="Raney B."/>
            <person name="Siepel A."/>
            <person name="Kent W.J."/>
            <person name="Haussler D."/>
            <person name="Eyras E."/>
            <person name="Castelo R."/>
            <person name="Abril J.F."/>
            <person name="Castellano S."/>
            <person name="Camara F."/>
            <person name="Parra G."/>
            <person name="Guigo R."/>
            <person name="Bourque G."/>
            <person name="Tesler G."/>
            <person name="Pevzner P.A."/>
            <person name="Smit A."/>
            <person name="Fulton L.A."/>
            <person name="Mardis E.R."/>
            <person name="Wilson R.K."/>
        </authorList>
    </citation>
    <scope>NUCLEOTIDE SEQUENCE [LARGE SCALE GENOMIC DNA]</scope>
    <source>
        <strain>Red jungle fowl</strain>
    </source>
</reference>
<reference key="2">
    <citation type="journal article" date="2008" name="Nature">
        <title>Dscam and Sidekick proteins direct lamina-specific synaptic connections in vertebrate retina.</title>
        <authorList>
            <person name="Yamagata M."/>
            <person name="Sanes J.R."/>
        </authorList>
    </citation>
    <scope>FUNCTION</scope>
    <scope>SUBCELLULAR LOCATION</scope>
    <scope>SUBUNIT</scope>
    <scope>TISSUE SPECIFICITY</scope>
</reference>
<gene>
    <name type="primary">DSCAML1</name>
</gene>
<proteinExistence type="evidence at protein level"/>